<reference key="1">
    <citation type="journal article" date="2009" name="J. Bacteriol.">
        <title>Genome sequences of three Agrobacterium biovars help elucidate the evolution of multichromosome genomes in bacteria.</title>
        <authorList>
            <person name="Slater S.C."/>
            <person name="Goldman B.S."/>
            <person name="Goodner B."/>
            <person name="Setubal J.C."/>
            <person name="Farrand S.K."/>
            <person name="Nester E.W."/>
            <person name="Burr T.J."/>
            <person name="Banta L."/>
            <person name="Dickerman A.W."/>
            <person name="Paulsen I."/>
            <person name="Otten L."/>
            <person name="Suen G."/>
            <person name="Welch R."/>
            <person name="Almeida N.F."/>
            <person name="Arnold F."/>
            <person name="Burton O.T."/>
            <person name="Du Z."/>
            <person name="Ewing A."/>
            <person name="Godsy E."/>
            <person name="Heisel S."/>
            <person name="Houmiel K.L."/>
            <person name="Jhaveri J."/>
            <person name="Lu J."/>
            <person name="Miller N.M."/>
            <person name="Norton S."/>
            <person name="Chen Q."/>
            <person name="Phoolcharoen W."/>
            <person name="Ohlin V."/>
            <person name="Ondrusek D."/>
            <person name="Pride N."/>
            <person name="Stricklin S.L."/>
            <person name="Sun J."/>
            <person name="Wheeler C."/>
            <person name="Wilson L."/>
            <person name="Zhu H."/>
            <person name="Wood D.W."/>
        </authorList>
    </citation>
    <scope>NUCLEOTIDE SEQUENCE [LARGE SCALE GENOMIC DNA]</scope>
    <source>
        <strain>K84 / ATCC BAA-868</strain>
    </source>
</reference>
<name>RL16_RHIR8</name>
<keyword id="KW-0687">Ribonucleoprotein</keyword>
<keyword id="KW-0689">Ribosomal protein</keyword>
<keyword id="KW-0694">RNA-binding</keyword>
<keyword id="KW-0699">rRNA-binding</keyword>
<keyword id="KW-0820">tRNA-binding</keyword>
<evidence type="ECO:0000255" key="1">
    <source>
        <dbReference type="HAMAP-Rule" id="MF_01342"/>
    </source>
</evidence>
<evidence type="ECO:0000305" key="2"/>
<gene>
    <name evidence="1" type="primary">rplP</name>
    <name type="ordered locus">Arad_1980</name>
</gene>
<organism>
    <name type="scientific">Rhizobium rhizogenes (strain K84 / ATCC BAA-868)</name>
    <name type="common">Agrobacterium radiobacter</name>
    <dbReference type="NCBI Taxonomy" id="311403"/>
    <lineage>
        <taxon>Bacteria</taxon>
        <taxon>Pseudomonadati</taxon>
        <taxon>Pseudomonadota</taxon>
        <taxon>Alphaproteobacteria</taxon>
        <taxon>Hyphomicrobiales</taxon>
        <taxon>Rhizobiaceae</taxon>
        <taxon>Rhizobium/Agrobacterium group</taxon>
        <taxon>Rhizobium</taxon>
    </lineage>
</organism>
<dbReference type="EMBL" id="CP000628">
    <property type="protein sequence ID" value="ACM26286.1"/>
    <property type="molecule type" value="Genomic_DNA"/>
</dbReference>
<dbReference type="RefSeq" id="WP_004118395.1">
    <property type="nucleotide sequence ID" value="NC_011985.1"/>
</dbReference>
<dbReference type="SMR" id="B9JDT5"/>
<dbReference type="STRING" id="311403.Arad_1980"/>
<dbReference type="GeneID" id="86848174"/>
<dbReference type="KEGG" id="ara:Arad_1980"/>
<dbReference type="eggNOG" id="COG0197">
    <property type="taxonomic scope" value="Bacteria"/>
</dbReference>
<dbReference type="HOGENOM" id="CLU_078858_2_1_5"/>
<dbReference type="Proteomes" id="UP000001600">
    <property type="component" value="Chromosome 1"/>
</dbReference>
<dbReference type="GO" id="GO:0022625">
    <property type="term" value="C:cytosolic large ribosomal subunit"/>
    <property type="evidence" value="ECO:0007669"/>
    <property type="project" value="TreeGrafter"/>
</dbReference>
<dbReference type="GO" id="GO:0019843">
    <property type="term" value="F:rRNA binding"/>
    <property type="evidence" value="ECO:0007669"/>
    <property type="project" value="UniProtKB-UniRule"/>
</dbReference>
<dbReference type="GO" id="GO:0003735">
    <property type="term" value="F:structural constituent of ribosome"/>
    <property type="evidence" value="ECO:0007669"/>
    <property type="project" value="InterPro"/>
</dbReference>
<dbReference type="GO" id="GO:0000049">
    <property type="term" value="F:tRNA binding"/>
    <property type="evidence" value="ECO:0007669"/>
    <property type="project" value="UniProtKB-KW"/>
</dbReference>
<dbReference type="GO" id="GO:0006412">
    <property type="term" value="P:translation"/>
    <property type="evidence" value="ECO:0007669"/>
    <property type="project" value="UniProtKB-UniRule"/>
</dbReference>
<dbReference type="CDD" id="cd01433">
    <property type="entry name" value="Ribosomal_L16_L10e"/>
    <property type="match status" value="1"/>
</dbReference>
<dbReference type="FunFam" id="3.90.1170.10:FF:000001">
    <property type="entry name" value="50S ribosomal protein L16"/>
    <property type="match status" value="1"/>
</dbReference>
<dbReference type="Gene3D" id="3.90.1170.10">
    <property type="entry name" value="Ribosomal protein L10e/L16"/>
    <property type="match status" value="1"/>
</dbReference>
<dbReference type="HAMAP" id="MF_01342">
    <property type="entry name" value="Ribosomal_uL16"/>
    <property type="match status" value="1"/>
</dbReference>
<dbReference type="InterPro" id="IPR047873">
    <property type="entry name" value="Ribosomal_uL16"/>
</dbReference>
<dbReference type="InterPro" id="IPR000114">
    <property type="entry name" value="Ribosomal_uL16_bact-type"/>
</dbReference>
<dbReference type="InterPro" id="IPR020798">
    <property type="entry name" value="Ribosomal_uL16_CS"/>
</dbReference>
<dbReference type="InterPro" id="IPR016180">
    <property type="entry name" value="Ribosomal_uL16_dom"/>
</dbReference>
<dbReference type="InterPro" id="IPR036920">
    <property type="entry name" value="Ribosomal_uL16_sf"/>
</dbReference>
<dbReference type="NCBIfam" id="TIGR01164">
    <property type="entry name" value="rplP_bact"/>
    <property type="match status" value="1"/>
</dbReference>
<dbReference type="PANTHER" id="PTHR12220">
    <property type="entry name" value="50S/60S RIBOSOMAL PROTEIN L16"/>
    <property type="match status" value="1"/>
</dbReference>
<dbReference type="PANTHER" id="PTHR12220:SF13">
    <property type="entry name" value="LARGE RIBOSOMAL SUBUNIT PROTEIN UL16M"/>
    <property type="match status" value="1"/>
</dbReference>
<dbReference type="Pfam" id="PF00252">
    <property type="entry name" value="Ribosomal_L16"/>
    <property type="match status" value="1"/>
</dbReference>
<dbReference type="PRINTS" id="PR00060">
    <property type="entry name" value="RIBOSOMALL16"/>
</dbReference>
<dbReference type="SUPFAM" id="SSF54686">
    <property type="entry name" value="Ribosomal protein L16p/L10e"/>
    <property type="match status" value="1"/>
</dbReference>
<dbReference type="PROSITE" id="PS00586">
    <property type="entry name" value="RIBOSOMAL_L16_1"/>
    <property type="match status" value="1"/>
</dbReference>
<dbReference type="PROSITE" id="PS00701">
    <property type="entry name" value="RIBOSOMAL_L16_2"/>
    <property type="match status" value="1"/>
</dbReference>
<accession>B9JDT5</accession>
<sequence length="137" mass="15527">MLQPKRTKYRKQFKGRIKGVAKGGSDLAFGEFGLKSQEPNRVNAREIEAARRAITRYMKRAGRVWIRVFPDVPVTAKPTEVRMGKGKGSVEYWACKVKPGRMMFEIDGVSEEIAREALRLGAAKLSVKTRFVQRIAE</sequence>
<comment type="function">
    <text evidence="1">Binds 23S rRNA and is also seen to make contacts with the A and possibly P site tRNAs.</text>
</comment>
<comment type="subunit">
    <text evidence="1">Part of the 50S ribosomal subunit.</text>
</comment>
<comment type="similarity">
    <text evidence="1">Belongs to the universal ribosomal protein uL16 family.</text>
</comment>
<proteinExistence type="inferred from homology"/>
<protein>
    <recommendedName>
        <fullName evidence="1">Large ribosomal subunit protein uL16</fullName>
    </recommendedName>
    <alternativeName>
        <fullName evidence="2">50S ribosomal protein L16</fullName>
    </alternativeName>
</protein>
<feature type="chain" id="PRO_1000166328" description="Large ribosomal subunit protein uL16">
    <location>
        <begin position="1"/>
        <end position="137"/>
    </location>
</feature>